<comment type="function">
    <text evidence="1">General (non sugar-specific) component of the phosphoenolpyruvate-dependent sugar phosphotransferase system (sugar PTS). This major carbohydrate active-transport system catalyzes the phosphorylation of incoming sugar substrates concomitantly with their translocation across the cell membrane. The phosphoryl group from phosphoenolpyruvate (PEP) is transferred to the phosphoryl carrier protein HPr by enzyme I. Phospho-HPr then transfers it to the PTS EIIA domain.</text>
</comment>
<comment type="subcellular location">
    <subcellularLocation>
        <location evidence="1">Cytoplasm</location>
    </subcellularLocation>
</comment>
<comment type="similarity">
    <text evidence="3">Belongs to the HPr family.</text>
</comment>
<protein>
    <recommendedName>
        <fullName>Phosphocarrier protein HPr</fullName>
    </recommendedName>
    <alternativeName>
        <fullName>Histidine-containing protein</fullName>
    </alternativeName>
</protein>
<proteinExistence type="inferred from homology"/>
<keyword id="KW-0963">Cytoplasm</keyword>
<keyword id="KW-0598">Phosphotransferase system</keyword>
<keyword id="KW-0762">Sugar transport</keyword>
<keyword id="KW-0813">Transport</keyword>
<dbReference type="EMBL" id="AL513382">
    <property type="protein sequence ID" value="CAD07663.1"/>
    <property type="molecule type" value="Genomic_DNA"/>
</dbReference>
<dbReference type="EMBL" id="AE014613">
    <property type="protein sequence ID" value="AAO68144.1"/>
    <property type="molecule type" value="Genomic_DNA"/>
</dbReference>
<dbReference type="RefSeq" id="NP_456968.1">
    <property type="nucleotide sequence ID" value="NC_003198.1"/>
</dbReference>
<dbReference type="RefSeq" id="WP_000487600.1">
    <property type="nucleotide sequence ID" value="NZ_WSUR01000025.1"/>
</dbReference>
<dbReference type="BMRB" id="P0AA08"/>
<dbReference type="SMR" id="P0AA08"/>
<dbReference type="STRING" id="220341.gene:17586567"/>
<dbReference type="GeneID" id="97602767"/>
<dbReference type="KEGG" id="stt:t0426"/>
<dbReference type="KEGG" id="sty:STY2667"/>
<dbReference type="PATRIC" id="fig|220341.7.peg.2704"/>
<dbReference type="eggNOG" id="COG1925">
    <property type="taxonomic scope" value="Bacteria"/>
</dbReference>
<dbReference type="HOGENOM" id="CLU_136230_2_3_6"/>
<dbReference type="OMA" id="APHGIHT"/>
<dbReference type="OrthoDB" id="9809047at2"/>
<dbReference type="Proteomes" id="UP000000541">
    <property type="component" value="Chromosome"/>
</dbReference>
<dbReference type="Proteomes" id="UP000002670">
    <property type="component" value="Chromosome"/>
</dbReference>
<dbReference type="GO" id="GO:0005737">
    <property type="term" value="C:cytoplasm"/>
    <property type="evidence" value="ECO:0007669"/>
    <property type="project" value="UniProtKB-SubCell"/>
</dbReference>
<dbReference type="GO" id="GO:0009401">
    <property type="term" value="P:phosphoenolpyruvate-dependent sugar phosphotransferase system"/>
    <property type="evidence" value="ECO:0007669"/>
    <property type="project" value="UniProtKB-KW"/>
</dbReference>
<dbReference type="CDD" id="cd00367">
    <property type="entry name" value="PTS-HPr_like"/>
    <property type="match status" value="1"/>
</dbReference>
<dbReference type="FunFam" id="3.30.1340.10:FF:000001">
    <property type="entry name" value="Phosphocarrier, HPr family"/>
    <property type="match status" value="1"/>
</dbReference>
<dbReference type="Gene3D" id="3.30.1340.10">
    <property type="entry name" value="HPr-like"/>
    <property type="match status" value="1"/>
</dbReference>
<dbReference type="InterPro" id="IPR050399">
    <property type="entry name" value="HPr"/>
</dbReference>
<dbReference type="InterPro" id="IPR000032">
    <property type="entry name" value="HPr-like"/>
</dbReference>
<dbReference type="InterPro" id="IPR035895">
    <property type="entry name" value="HPr-like_sf"/>
</dbReference>
<dbReference type="InterPro" id="IPR001020">
    <property type="entry name" value="PTS_HPr_His_P_site"/>
</dbReference>
<dbReference type="InterPro" id="IPR002114">
    <property type="entry name" value="PTS_HPr_Ser_P_site"/>
</dbReference>
<dbReference type="NCBIfam" id="NF008104">
    <property type="entry name" value="PRK10850.1"/>
    <property type="match status" value="1"/>
</dbReference>
<dbReference type="NCBIfam" id="TIGR01003">
    <property type="entry name" value="PTS_HPr_family"/>
    <property type="match status" value="1"/>
</dbReference>
<dbReference type="PANTHER" id="PTHR33705">
    <property type="entry name" value="PHOSPHOCARRIER PROTEIN HPR"/>
    <property type="match status" value="1"/>
</dbReference>
<dbReference type="PANTHER" id="PTHR33705:SF1">
    <property type="entry name" value="PHOSPHOCARRIER PROTEIN HPR"/>
    <property type="match status" value="1"/>
</dbReference>
<dbReference type="Pfam" id="PF00381">
    <property type="entry name" value="PTS-HPr"/>
    <property type="match status" value="1"/>
</dbReference>
<dbReference type="PRINTS" id="PR00107">
    <property type="entry name" value="PHOSPHOCPHPR"/>
</dbReference>
<dbReference type="SUPFAM" id="SSF55594">
    <property type="entry name" value="HPr-like"/>
    <property type="match status" value="1"/>
</dbReference>
<dbReference type="PROSITE" id="PS51350">
    <property type="entry name" value="PTS_HPR_DOM"/>
    <property type="match status" value="1"/>
</dbReference>
<dbReference type="PROSITE" id="PS00369">
    <property type="entry name" value="PTS_HPR_HIS"/>
    <property type="match status" value="1"/>
</dbReference>
<dbReference type="PROSITE" id="PS00589">
    <property type="entry name" value="PTS_HPR_SER"/>
    <property type="match status" value="1"/>
</dbReference>
<feature type="chain" id="PRO_0000107869" description="Phosphocarrier protein HPr">
    <location>
        <begin position="1"/>
        <end position="85"/>
    </location>
</feature>
<feature type="domain" description="HPr" evidence="2">
    <location>
        <begin position="1"/>
        <end position="85"/>
    </location>
</feature>
<feature type="active site" description="Pros-phosphohistidine intermediate" evidence="2">
    <location>
        <position position="15"/>
    </location>
</feature>
<organism>
    <name type="scientific">Salmonella typhi</name>
    <dbReference type="NCBI Taxonomy" id="90370"/>
    <lineage>
        <taxon>Bacteria</taxon>
        <taxon>Pseudomonadati</taxon>
        <taxon>Pseudomonadota</taxon>
        <taxon>Gammaproteobacteria</taxon>
        <taxon>Enterobacterales</taxon>
        <taxon>Enterobacteriaceae</taxon>
        <taxon>Salmonella</taxon>
    </lineage>
</organism>
<gene>
    <name type="primary">ptsH</name>
    <name type="ordered locus">STY2667</name>
    <name type="ordered locus">t0426</name>
</gene>
<evidence type="ECO:0000250" key="1"/>
<evidence type="ECO:0000255" key="2">
    <source>
        <dbReference type="PROSITE-ProRule" id="PRU00681"/>
    </source>
</evidence>
<evidence type="ECO:0000305" key="3"/>
<sequence>MFQQEVTITAPNGLHTRPAAQFVKEAKGFTSEITVTSNGKSASAKSLFKLQTLGLTQGTVVTISAEGEDEQKAVEHLVKLMAELE</sequence>
<name>PTHP_SALTI</name>
<reference key="1">
    <citation type="journal article" date="2001" name="Nature">
        <title>Complete genome sequence of a multiple drug resistant Salmonella enterica serovar Typhi CT18.</title>
        <authorList>
            <person name="Parkhill J."/>
            <person name="Dougan G."/>
            <person name="James K.D."/>
            <person name="Thomson N.R."/>
            <person name="Pickard D."/>
            <person name="Wain J."/>
            <person name="Churcher C.M."/>
            <person name="Mungall K.L."/>
            <person name="Bentley S.D."/>
            <person name="Holden M.T.G."/>
            <person name="Sebaihia M."/>
            <person name="Baker S."/>
            <person name="Basham D."/>
            <person name="Brooks K."/>
            <person name="Chillingworth T."/>
            <person name="Connerton P."/>
            <person name="Cronin A."/>
            <person name="Davis P."/>
            <person name="Davies R.M."/>
            <person name="Dowd L."/>
            <person name="White N."/>
            <person name="Farrar J."/>
            <person name="Feltwell T."/>
            <person name="Hamlin N."/>
            <person name="Haque A."/>
            <person name="Hien T.T."/>
            <person name="Holroyd S."/>
            <person name="Jagels K."/>
            <person name="Krogh A."/>
            <person name="Larsen T.S."/>
            <person name="Leather S."/>
            <person name="Moule S."/>
            <person name="O'Gaora P."/>
            <person name="Parry C."/>
            <person name="Quail M.A."/>
            <person name="Rutherford K.M."/>
            <person name="Simmonds M."/>
            <person name="Skelton J."/>
            <person name="Stevens K."/>
            <person name="Whitehead S."/>
            <person name="Barrell B.G."/>
        </authorList>
    </citation>
    <scope>NUCLEOTIDE SEQUENCE [LARGE SCALE GENOMIC DNA]</scope>
    <source>
        <strain>CT18</strain>
    </source>
</reference>
<reference key="2">
    <citation type="journal article" date="2003" name="J. Bacteriol.">
        <title>Comparative genomics of Salmonella enterica serovar Typhi strains Ty2 and CT18.</title>
        <authorList>
            <person name="Deng W."/>
            <person name="Liou S.-R."/>
            <person name="Plunkett G. III"/>
            <person name="Mayhew G.F."/>
            <person name="Rose D.J."/>
            <person name="Burland V."/>
            <person name="Kodoyianni V."/>
            <person name="Schwartz D.C."/>
            <person name="Blattner F.R."/>
        </authorList>
    </citation>
    <scope>NUCLEOTIDE SEQUENCE [LARGE SCALE GENOMIC DNA]</scope>
    <source>
        <strain>ATCC 700931 / Ty2</strain>
    </source>
</reference>
<accession>P0AA08</accession>
<accession>P05525</accession>
<accession>P07006</accession>